<name>BABA2_MOUSE</name>
<protein>
    <recommendedName>
        <fullName>BRISC and BRCA1-A complex member 2</fullName>
    </recommendedName>
    <alternativeName>
        <fullName>BRCA1-A complex subunit BRE</fullName>
    </alternativeName>
    <alternativeName>
        <fullName>BRCA1/BRCA2-containing complex subunit 45</fullName>
    </alternativeName>
    <alternativeName>
        <fullName>Brain and reproductive organ-expressed protein</fullName>
    </alternativeName>
</protein>
<sequence length="383" mass="43545">MSPEIALNRISPMLSPFISSVVRNGKVGLDATNCLRITDLKSGCTSLTPGPNCDRFKLHIPYAGETLKWDIIFNAQYPELPPDFIFGEDAEFLPDPSALHNLASWNPSNPECLLLVVKELVQQYHQFQCGRLRESSRLMFEYQTLLEEPQYGENMEIYAGKKNNWTGEFSARFLLKLPVDFSNIPTYLLKDVNEDPGEDVALLSVSFEDTEATQVYPKLYLSPRIEHALGGSSALHIPAFPGGGCLIDYVPQVCHLLTNKVQYVIQGYHKRREYIAAFLSHFGTGVVEYDAEGFTKLTLLLMWKDFCFLVHIDLPLFFPRDQPTLTFQSVYHFTNSGQLYSQAQKNYPYSPRWDGNEMAKRAKAYFKTFVPQFQEAAFANGKL</sequence>
<comment type="function">
    <text evidence="1 6">Component of the BRCA1-A complex, a complex that specifically recognizes 'Lys-63'-linked ubiquitinated histones H2A and H2AX at DNA lesions sites, leading to target the BRCA1-BARD1 heterodimer to sites of DNA damage at double-strand breaks (DSBs). The BRCA1-A complex also possesses deubiquitinase activity that specifically removes 'Lys-63'-linked ubiquitin on histones H2A and H2AX. In the BRCA1-A complex, it acts as an adapter that bridges the interaction between BABAM1/NBA1 and the rest of the complex, thereby being required for the complex integrity and modulating the E3 ubiquitin ligase activity of the BRCA1-BARD1 heterodimer. Probably also plays a role as a component of the BRISC complex, a multiprotein complex that specifically cleaves 'Lys-63'-linked ubiquitin (By similarity). May regulate TNF-alpha signaling through its interactions with TNFRSF1A.</text>
</comment>
<comment type="function">
    <text evidence="2 9">Component of the BRCA1-A complex, a complex that specifically recognizes 'Lys-63'-linked ubiquitinated histones H2A and H2AX at DNA lesions sites, leading to target the BRCA1-BARD1 heterodimer to sites of DNA damage at double-strand breaks (DSBs). The BRCA1-A complex also possesses deubiquitinase activity that specifically removes 'Lys-63'-linked ubiquitin on histones H2A and H2AX. In the BRCA1-A complex, it acts as an adapter that bridges the interaction between BABAM1/NBA1 and the rest of the complex, thereby being required for the complex integrity and modulating the E3 ubiquitin ligase activity of the BRCA1-BARD1 heterodimer. Component of the BRISC complex, a multiprotein complex that specifically cleaves 'Lys-63'-linked ubiquitin in various substrates. Within the BRISC complex, acts as an adapter that bridges the interaction between BABAM1/NBA1 and the rest of the complex, thereby being required for the complex integrity. The BRISC complex is required for normal mitotic spindle assembly and microtubule attachment to kinetochores via its role in deubiquitinating NUMA1. The BRISC complex plays a role in interferon signaling via its role in the deubiquitination of the interferon receptor IFNAR1; deubiquitination increases IFNAR1 activity by enhancing its stability and cell surface expression. Down-regulates the response to bacterial lipopolysaccharide (LPS) via its role in IFNAR1 deubiquitination. May play a role in homeostasis or cellular differentiation in cells of neural, epithelial and germline origins (By similarity). May also act as a death receptor-associated anti-apoptotic protein, which inhibits the mitochondrial apoptotic pathway. May regulate TNF-alpha signaling through its interactions with TNFRSF1A; however these effects may be indirect (PubMed:9737713).</text>
</comment>
<comment type="subunit">
    <text evidence="2 9">Component of the ARISC complex, at least composed of UIMC1/RAP80, ABRAXAS1, BRCC3/BRCC36, BABAM2 and BABAM1/NBA1. Component of the BRCA1-A complex, at least composed of BRCA1, BARD1, UIMC1/RAP80, ABRAXAS1, BRCC3/BRCC36, BABAM2 and BABAM1/NBA1. In the BRCA1-A complex, interacts directly with ABRAXAS1, BRCC3/BRCC36 and BABAM1/NBA1. Binds polyubiquitin. Component of the BRISC complex, at least composed of ABRAXAS2, BRCC3/BRCC36, BABAM2 and BABAM1/NBA1. Identified in a complex with SHMT2 and the other subunits of the BRISC complex. Component of the BRCA1/BRCA2 containing complex (BRCC), which also contains BRCA1, BRCA2, BARD1, BRCC3/BRCC36 and RAD51. BRCC is a ubiquitin E3 ligase complex that enhances cellular survival following DNA damage. May interact with FAS and TNFRSF1A (PubMed:9737713).</text>
</comment>
<comment type="subcellular location">
    <subcellularLocation>
        <location evidence="2">Cytoplasm</location>
    </subcellularLocation>
    <subcellularLocation>
        <location evidence="2">Nucleus</location>
    </subcellularLocation>
    <text evidence="2">Localizes at sites of DNA damage at double-strand breaks (DSBs).</text>
</comment>
<comment type="alternative products">
    <event type="alternative splicing"/>
    <isoform>
        <id>Q8K3W0-2</id>
        <name evidence="5">2</name>
        <sequence type="displayed"/>
    </isoform>
    <isoform>
        <id>Q8K3W0-1</id>
        <name evidence="5">1</name>
        <name evidence="5">I</name>
        <sequence type="described" ref="VSP_051953"/>
    </isoform>
    <isoform>
        <id>Q8K3W0-4</id>
        <name>3</name>
        <name>II</name>
        <name>II3+</name>
        <sequence type="described" ref="VSP_051952"/>
    </isoform>
    <isoform>
        <id>Q8K3W0-5</id>
        <name>4</name>
        <name>IV</name>
        <sequence type="described" ref="VSP_037263"/>
    </isoform>
    <isoform>
        <id>Q8K3W0-6</id>
        <name>5</name>
        <name>III</name>
        <sequence type="described" ref="VSP_037262"/>
    </isoform>
    <text evidence="8">Additional isoforms may exist.</text>
</comment>
<comment type="tissue specificity">
    <text evidence="4 5">Expressed in brain, heart, kidney, liver, lung, testis, germinal center B-cells and various mouse cell lines.</text>
</comment>
<comment type="domain">
    <text evidence="1">Contains 2 ubiquitin-conjugating enzyme family-like (UEV-like) regions. These regions lack the critical Cys residues required for ubiquitination but retain the ability to bind ubiquitin (By similarity).</text>
</comment>
<comment type="domain">
    <text evidence="2">Contains 2 ubiquitin-conjugating enzyme family-like (UEV-like) regions. These regions lack the critical Cys residues required for ubiquitination but retain the ability to bind ubiquitin.</text>
</comment>
<comment type="similarity">
    <text evidence="3">Belongs to the BABAM2 family.</text>
</comment>
<comment type="sequence caution" evidence="8">
    <conflict type="miscellaneous discrepancy">
        <sequence resource="EMBL-CDS" id="BAC34385"/>
    </conflict>
    <text>Probable cloning artifact.</text>
</comment>
<dbReference type="EMBL" id="AF440752">
    <property type="protein sequence ID" value="AAL40809.1"/>
    <property type="molecule type" value="mRNA"/>
</dbReference>
<dbReference type="EMBL" id="AF527952">
    <property type="protein sequence ID" value="AAM92774.1"/>
    <property type="molecule type" value="mRNA"/>
</dbReference>
<dbReference type="EMBL" id="AF527953">
    <property type="protein sequence ID" value="AAM92775.1"/>
    <property type="molecule type" value="mRNA"/>
</dbReference>
<dbReference type="EMBL" id="AF527954">
    <property type="protein sequence ID" value="AAM92776.1"/>
    <property type="molecule type" value="mRNA"/>
</dbReference>
<dbReference type="EMBL" id="AF527955">
    <property type="protein sequence ID" value="AAM92777.1"/>
    <property type="molecule type" value="mRNA"/>
</dbReference>
<dbReference type="EMBL" id="AF538925">
    <property type="protein sequence ID" value="AAN15148.1"/>
    <property type="molecule type" value="mRNA"/>
</dbReference>
<dbReference type="EMBL" id="AK050695">
    <property type="protein sequence ID" value="BAC34385.1"/>
    <property type="status" value="ALT_SEQ"/>
    <property type="molecule type" value="mRNA"/>
</dbReference>
<dbReference type="EMBL" id="AK080991">
    <property type="protein sequence ID" value="BAC38108.1"/>
    <property type="molecule type" value="mRNA"/>
</dbReference>
<dbReference type="EMBL" id="AK156929">
    <property type="protein sequence ID" value="BAE33900.1"/>
    <property type="molecule type" value="mRNA"/>
</dbReference>
<dbReference type="EMBL" id="BC061000">
    <property type="protein sequence ID" value="AAH61000.1"/>
    <property type="molecule type" value="mRNA"/>
</dbReference>
<dbReference type="EMBL" id="BC100565">
    <property type="protein sequence ID" value="AAI00566.1"/>
    <property type="molecule type" value="mRNA"/>
</dbReference>
<dbReference type="CCDS" id="CCDS19188.1">
    <molecule id="Q8K3W0-2"/>
</dbReference>
<dbReference type="CCDS" id="CCDS19189.1">
    <molecule id="Q8K3W0-1"/>
</dbReference>
<dbReference type="CCDS" id="CCDS39058.1">
    <molecule id="Q8K3W0-5"/>
</dbReference>
<dbReference type="CCDS" id="CCDS39059.1">
    <molecule id="Q8K3W0-4"/>
</dbReference>
<dbReference type="CCDS" id="CCDS51461.1">
    <molecule id="Q8K3W0-6"/>
</dbReference>
<dbReference type="RefSeq" id="NP_653124.1">
    <molecule id="Q8K3W0-2"/>
    <property type="nucleotide sequence ID" value="NM_144541.1"/>
</dbReference>
<dbReference type="RefSeq" id="NP_851796.1">
    <molecule id="Q8K3W0-1"/>
    <property type="nucleotide sequence ID" value="NM_181279.1"/>
</dbReference>
<dbReference type="RefSeq" id="NP_851797.1">
    <molecule id="Q8K3W0-5"/>
    <property type="nucleotide sequence ID" value="NM_181280.1"/>
</dbReference>
<dbReference type="RefSeq" id="NP_851798.1">
    <molecule id="Q8K3W0-6"/>
    <property type="nucleotide sequence ID" value="NM_181281.1"/>
</dbReference>
<dbReference type="RefSeq" id="NP_851799.1">
    <molecule id="Q8K3W0-4"/>
    <property type="nucleotide sequence ID" value="NM_181282.1"/>
</dbReference>
<dbReference type="PDB" id="6GVW">
    <property type="method" value="X-ray"/>
    <property type="resolution" value="3.75 A"/>
    <property type="chains" value="C/H=1-383"/>
</dbReference>
<dbReference type="PDBsum" id="6GVW"/>
<dbReference type="SMR" id="Q8K3W0"/>
<dbReference type="BioGRID" id="223733">
    <property type="interactions" value="17"/>
</dbReference>
<dbReference type="ComplexPortal" id="CPX-4702">
    <property type="entry name" value="BRCA1-A complex"/>
</dbReference>
<dbReference type="ComplexPortal" id="CPX-972">
    <property type="entry name" value="BRCC ubiquitin ligase complex"/>
</dbReference>
<dbReference type="FunCoup" id="Q8K3W0">
    <property type="interactions" value="2954"/>
</dbReference>
<dbReference type="STRING" id="10090.ENSMUSP00000069133"/>
<dbReference type="GlyGen" id="Q8K3W0">
    <property type="glycosylation" value="1 site, 1 N-linked glycan (1 site)"/>
</dbReference>
<dbReference type="iPTMnet" id="Q8K3W0"/>
<dbReference type="PhosphoSitePlus" id="Q8K3W0"/>
<dbReference type="SwissPalm" id="Q8K3W0"/>
<dbReference type="jPOST" id="Q8K3W0"/>
<dbReference type="PeptideAtlas" id="Q8K3W0"/>
<dbReference type="ProteomicsDB" id="273528">
    <molecule id="Q8K3W0-2"/>
</dbReference>
<dbReference type="ProteomicsDB" id="273529">
    <molecule id="Q8K3W0-1"/>
</dbReference>
<dbReference type="ProteomicsDB" id="273530">
    <molecule id="Q8K3W0-4"/>
</dbReference>
<dbReference type="ProteomicsDB" id="273531">
    <molecule id="Q8K3W0-5"/>
</dbReference>
<dbReference type="ProteomicsDB" id="273532">
    <molecule id="Q8K3W0-6"/>
</dbReference>
<dbReference type="Pumba" id="Q8K3W0"/>
<dbReference type="Antibodypedia" id="13903">
    <property type="antibodies" value="248 antibodies from 35 providers"/>
</dbReference>
<dbReference type="Ensembl" id="ENSMUST00000063813.11">
    <molecule id="Q8K3W0-1"/>
    <property type="protein sequence ID" value="ENSMUSP00000069133.5"/>
    <property type="gene ID" value="ENSMUSG00000052139.19"/>
</dbReference>
<dbReference type="Ensembl" id="ENSMUST00000071531.12">
    <molecule id="Q8K3W0-5"/>
    <property type="protein sequence ID" value="ENSMUSP00000071462.6"/>
    <property type="gene ID" value="ENSMUSG00000052139.19"/>
</dbReference>
<dbReference type="Ensembl" id="ENSMUST00000114507.10">
    <molecule id="Q8K3W0-6"/>
    <property type="protein sequence ID" value="ENSMUSP00000110152.4"/>
    <property type="gene ID" value="ENSMUSG00000052139.19"/>
</dbReference>
<dbReference type="Ensembl" id="ENSMUST00000131995.7">
    <molecule id="Q8K3W0-4"/>
    <property type="protein sequence ID" value="ENSMUSP00000128351.2"/>
    <property type="gene ID" value="ENSMUSG00000052139.19"/>
</dbReference>
<dbReference type="Ensembl" id="ENSMUST00000201352.4">
    <molecule id="Q8K3W0-2"/>
    <property type="protein sequence ID" value="ENSMUSP00000144205.2"/>
    <property type="gene ID" value="ENSMUSG00000052139.19"/>
</dbReference>
<dbReference type="GeneID" id="107976"/>
<dbReference type="KEGG" id="mmu:107976"/>
<dbReference type="UCSC" id="uc008wza.1">
    <molecule id="Q8K3W0-2"/>
    <property type="organism name" value="mouse"/>
</dbReference>
<dbReference type="UCSC" id="uc008wzb.1">
    <molecule id="Q8K3W0-1"/>
    <property type="organism name" value="mouse"/>
</dbReference>
<dbReference type="UCSC" id="uc008wzc.1">
    <molecule id="Q8K3W0-5"/>
    <property type="organism name" value="mouse"/>
</dbReference>
<dbReference type="UCSC" id="uc008wze.1">
    <molecule id="Q8K3W0-6"/>
    <property type="organism name" value="mouse"/>
</dbReference>
<dbReference type="AGR" id="MGI:1333875"/>
<dbReference type="CTD" id="9577"/>
<dbReference type="MGI" id="MGI:1333875">
    <property type="gene designation" value="Babam2"/>
</dbReference>
<dbReference type="VEuPathDB" id="HostDB:ENSMUSG00000052139"/>
<dbReference type="GeneTree" id="ENSGT00390000004208"/>
<dbReference type="HOGENOM" id="CLU_1133268_0_0_1"/>
<dbReference type="InParanoid" id="Q8K3W0"/>
<dbReference type="OMA" id="AGSTWRH"/>
<dbReference type="OrthoDB" id="2005at9989"/>
<dbReference type="PhylomeDB" id="Q8K3W0"/>
<dbReference type="TreeFam" id="TF328507"/>
<dbReference type="Reactome" id="R-MMU-5689901">
    <property type="pathway name" value="Metalloprotease DUBs"/>
</dbReference>
<dbReference type="Reactome" id="R-MMU-5693565">
    <property type="pathway name" value="Recruitment and ATM-mediated phosphorylation of repair and signaling proteins at DNA double strand breaks"/>
</dbReference>
<dbReference type="Reactome" id="R-MMU-5693571">
    <property type="pathway name" value="Nonhomologous End-Joining (NHEJ)"/>
</dbReference>
<dbReference type="Reactome" id="R-MMU-5693607">
    <property type="pathway name" value="Processing of DNA double-strand break ends"/>
</dbReference>
<dbReference type="Reactome" id="R-MMU-69473">
    <property type="pathway name" value="G2/M DNA damage checkpoint"/>
</dbReference>
<dbReference type="BioGRID-ORCS" id="107976">
    <property type="hits" value="9 hits in 117 CRISPR screens"/>
</dbReference>
<dbReference type="ChiTaRS" id="Bre">
    <property type="organism name" value="mouse"/>
</dbReference>
<dbReference type="PRO" id="PR:Q8K3W0"/>
<dbReference type="Proteomes" id="UP000000589">
    <property type="component" value="Chromosome 5"/>
</dbReference>
<dbReference type="RNAct" id="Q8K3W0">
    <property type="molecule type" value="protein"/>
</dbReference>
<dbReference type="Bgee" id="ENSMUSG00000052139">
    <property type="expression patterns" value="Expressed in lens of camera-type eye and 257 other cell types or tissues"/>
</dbReference>
<dbReference type="ExpressionAtlas" id="Q8K3W0">
    <property type="expression patterns" value="baseline and differential"/>
</dbReference>
<dbReference type="GO" id="GO:0070531">
    <property type="term" value="C:BRCA1-A complex"/>
    <property type="evidence" value="ECO:0000250"/>
    <property type="project" value="UniProtKB"/>
</dbReference>
<dbReference type="GO" id="GO:0070552">
    <property type="term" value="C:BRISC complex"/>
    <property type="evidence" value="ECO:0000250"/>
    <property type="project" value="UniProtKB"/>
</dbReference>
<dbReference type="GO" id="GO:0005737">
    <property type="term" value="C:cytoplasm"/>
    <property type="evidence" value="ECO:0000250"/>
    <property type="project" value="UniProtKB"/>
</dbReference>
<dbReference type="GO" id="GO:0005829">
    <property type="term" value="C:cytosol"/>
    <property type="evidence" value="ECO:0007669"/>
    <property type="project" value="Ensembl"/>
</dbReference>
<dbReference type="GO" id="GO:0000152">
    <property type="term" value="C:nuclear ubiquitin ligase complex"/>
    <property type="evidence" value="ECO:0000250"/>
    <property type="project" value="UniProtKB"/>
</dbReference>
<dbReference type="GO" id="GO:0005634">
    <property type="term" value="C:nucleus"/>
    <property type="evidence" value="ECO:0000250"/>
    <property type="project" value="UniProtKB"/>
</dbReference>
<dbReference type="GO" id="GO:0031593">
    <property type="term" value="F:polyubiquitin modification-dependent protein binding"/>
    <property type="evidence" value="ECO:0000250"/>
    <property type="project" value="UniProtKB"/>
</dbReference>
<dbReference type="GO" id="GO:0005164">
    <property type="term" value="F:tumor necrosis factor receptor binding"/>
    <property type="evidence" value="ECO:0000314"/>
    <property type="project" value="UniProtKB"/>
</dbReference>
<dbReference type="GO" id="GO:0006915">
    <property type="term" value="P:apoptotic process"/>
    <property type="evidence" value="ECO:0007669"/>
    <property type="project" value="UniProtKB-KW"/>
</dbReference>
<dbReference type="GO" id="GO:0051301">
    <property type="term" value="P:cell division"/>
    <property type="evidence" value="ECO:0007669"/>
    <property type="project" value="UniProtKB-KW"/>
</dbReference>
<dbReference type="GO" id="GO:0071479">
    <property type="term" value="P:cellular response to ionizing radiation"/>
    <property type="evidence" value="ECO:0000266"/>
    <property type="project" value="ComplexPortal"/>
</dbReference>
<dbReference type="GO" id="GO:0006325">
    <property type="term" value="P:chromatin organization"/>
    <property type="evidence" value="ECO:0007669"/>
    <property type="project" value="UniProtKB-KW"/>
</dbReference>
<dbReference type="GO" id="GO:0006974">
    <property type="term" value="P:DNA damage response"/>
    <property type="evidence" value="ECO:0000250"/>
    <property type="project" value="UniProtKB"/>
</dbReference>
<dbReference type="GO" id="GO:0006302">
    <property type="term" value="P:double-strand break repair"/>
    <property type="evidence" value="ECO:0000250"/>
    <property type="project" value="UniProtKB"/>
</dbReference>
<dbReference type="GO" id="GO:0007095">
    <property type="term" value="P:mitotic G2 DNA damage checkpoint signaling"/>
    <property type="evidence" value="ECO:0000250"/>
    <property type="project" value="UniProtKB"/>
</dbReference>
<dbReference type="GO" id="GO:0044818">
    <property type="term" value="P:mitotic G2/M transition checkpoint"/>
    <property type="evidence" value="ECO:0000303"/>
    <property type="project" value="ComplexPortal"/>
</dbReference>
<dbReference type="GO" id="GO:0043066">
    <property type="term" value="P:negative regulation of apoptotic process"/>
    <property type="evidence" value="ECO:0000250"/>
    <property type="project" value="UniProtKB"/>
</dbReference>
<dbReference type="GO" id="GO:0045739">
    <property type="term" value="P:positive regulation of DNA repair"/>
    <property type="evidence" value="ECO:0000250"/>
    <property type="project" value="UniProtKB"/>
</dbReference>
<dbReference type="GO" id="GO:2000001">
    <property type="term" value="P:regulation of DNA damage checkpoint"/>
    <property type="evidence" value="ECO:0000303"/>
    <property type="project" value="ComplexPortal"/>
</dbReference>
<dbReference type="GO" id="GO:0006282">
    <property type="term" value="P:regulation of DNA repair"/>
    <property type="evidence" value="ECO:0000303"/>
    <property type="project" value="ComplexPortal"/>
</dbReference>
<dbReference type="GO" id="GO:0010212">
    <property type="term" value="P:response to ionizing radiation"/>
    <property type="evidence" value="ECO:0000250"/>
    <property type="project" value="UniProtKB"/>
</dbReference>
<dbReference type="CDD" id="cd23664">
    <property type="entry name" value="BRE"/>
    <property type="match status" value="1"/>
</dbReference>
<dbReference type="InterPro" id="IPR010358">
    <property type="entry name" value="BRE"/>
</dbReference>
<dbReference type="PANTHER" id="PTHR15189">
    <property type="entry name" value="BRISC AND BRCA1-A COMPLEX MEMBER 2"/>
    <property type="match status" value="1"/>
</dbReference>
<dbReference type="PANTHER" id="PTHR15189:SF7">
    <property type="entry name" value="BRISC AND BRCA1-A COMPLEX MEMBER 2"/>
    <property type="match status" value="1"/>
</dbReference>
<dbReference type="Pfam" id="PF06113">
    <property type="entry name" value="BRE"/>
    <property type="match status" value="1"/>
</dbReference>
<feature type="chain" id="PRO_0000224190" description="BRISC and BRCA1-A complex member 2">
    <location>
        <begin position="1"/>
        <end position="383"/>
    </location>
</feature>
<feature type="region of interest" description="UEV-like 1">
    <location>
        <begin position="30"/>
        <end position="147"/>
    </location>
</feature>
<feature type="region of interest" description="UEV-like 2">
    <location>
        <begin position="275"/>
        <end position="364"/>
    </location>
</feature>
<feature type="modified residue" description="N-acetylmethionine" evidence="2">
    <location>
        <position position="1"/>
    </location>
</feature>
<feature type="modified residue" description="Phosphoserine" evidence="2">
    <location>
        <position position="2"/>
    </location>
</feature>
<feature type="splice variant" id="VSP_051952" description="In isoform 3." evidence="7">
    <location>
        <begin position="1"/>
        <end position="138"/>
    </location>
</feature>
<feature type="splice variant" id="VSP_037262" description="In isoform 5." evidence="7">
    <original>MSPEIALNRISPMLSPFISSVVRNGKVGLDATNCLRITDLKSGCTSLTPGPNCDRFKLHIPYAGETLKW</original>
    <variation>MCACR</variation>
    <location>
        <begin position="1"/>
        <end position="69"/>
    </location>
</feature>
<feature type="splice variant" id="VSP_037263" description="In isoform 4." evidence="7">
    <original>MSPEIALNRISPMLSPFISSVVRNGKVGLDATNCLRITDLKSG</original>
    <variation>MCACNEWYGVPDLEKASYLWRKKENHLPLEKGQN</variation>
    <location>
        <begin position="1"/>
        <end position="43"/>
    </location>
</feature>
<feature type="splice variant" id="VSP_051953" description="In isoform 1." evidence="7">
    <original>VGLDATNCLRITDLKSG</original>
    <variation>IHEKGPSQKLSFKSCSYHLPMCACNEWYGVPDLEKASYLWRKKENHLPLEKGQN</variation>
    <location>
        <begin position="27"/>
        <end position="43"/>
    </location>
</feature>
<feature type="sequence conflict" description="In Ref. 3; AAH61000." evidence="8" ref="3">
    <original>W</original>
    <variation>R</variation>
    <location>
        <position position="105"/>
    </location>
</feature>
<gene>
    <name type="primary">Babam2</name>
    <name evidence="15" type="synonym">Bre</name>
</gene>
<accession>Q8K3W0</accession>
<accession>Q497G6</accession>
<accession>Q6P8Z2</accession>
<accession>Q8BKU1</accession>
<accession>Q8CJ13</accession>
<accession>Q8JZP0</accession>
<accession>Q8K3V9</accession>
<accession>Q8VHN1</accession>
<evidence type="ECO:0000250" key="1"/>
<evidence type="ECO:0000250" key="2">
    <source>
        <dbReference type="UniProtKB" id="Q9NXR7"/>
    </source>
</evidence>
<evidence type="ECO:0000255" key="3"/>
<evidence type="ECO:0000269" key="4">
    <source>
    </source>
</evidence>
<evidence type="ECO:0000269" key="5">
    <source>
    </source>
</evidence>
<evidence type="ECO:0000269" key="6">
    <source>
    </source>
</evidence>
<evidence type="ECO:0000303" key="7">
    <source>
    </source>
</evidence>
<evidence type="ECO:0000305" key="8"/>
<evidence type="ECO:0000305" key="9">
    <source>
    </source>
</evidence>
<evidence type="ECO:0000312" key="10">
    <source>
        <dbReference type="EMBL" id="AAH61000.1"/>
    </source>
</evidence>
<evidence type="ECO:0000312" key="11">
    <source>
        <dbReference type="EMBL" id="AAM92774.1"/>
    </source>
</evidence>
<evidence type="ECO:0000312" key="12">
    <source>
        <dbReference type="EMBL" id="BAC34385.1"/>
    </source>
</evidence>
<evidence type="ECO:0000312" key="13">
    <source>
        <dbReference type="EMBL" id="BAC38108.1"/>
    </source>
</evidence>
<evidence type="ECO:0000312" key="14">
    <source>
        <dbReference type="EMBL" id="BAE33900.1"/>
    </source>
</evidence>
<evidence type="ECO:0000312" key="15">
    <source>
        <dbReference type="MGI" id="MGI:1333875"/>
    </source>
</evidence>
<proteinExistence type="evidence at protein level"/>
<organism>
    <name type="scientific">Mus musculus</name>
    <name type="common">Mouse</name>
    <dbReference type="NCBI Taxonomy" id="10090"/>
    <lineage>
        <taxon>Eukaryota</taxon>
        <taxon>Metazoa</taxon>
        <taxon>Chordata</taxon>
        <taxon>Craniata</taxon>
        <taxon>Vertebrata</taxon>
        <taxon>Euteleostomi</taxon>
        <taxon>Mammalia</taxon>
        <taxon>Eutheria</taxon>
        <taxon>Euarchontoglires</taxon>
        <taxon>Glires</taxon>
        <taxon>Rodentia</taxon>
        <taxon>Myomorpha</taxon>
        <taxon>Muroidea</taxon>
        <taxon>Muridae</taxon>
        <taxon>Murinae</taxon>
        <taxon>Mus</taxon>
        <taxon>Mus</taxon>
    </lineage>
</organism>
<keyword id="KW-0002">3D-structure</keyword>
<keyword id="KW-0007">Acetylation</keyword>
<keyword id="KW-0025">Alternative splicing</keyword>
<keyword id="KW-0053">Apoptosis</keyword>
<keyword id="KW-0131">Cell cycle</keyword>
<keyword id="KW-0132">Cell division</keyword>
<keyword id="KW-0156">Chromatin regulator</keyword>
<keyword id="KW-0963">Cytoplasm</keyword>
<keyword id="KW-0227">DNA damage</keyword>
<keyword id="KW-0234">DNA repair</keyword>
<keyword id="KW-0498">Mitosis</keyword>
<keyword id="KW-0539">Nucleus</keyword>
<keyword id="KW-0597">Phosphoprotein</keyword>
<keyword id="KW-1185">Reference proteome</keyword>
<keyword id="KW-0677">Repeat</keyword>
<keyword id="KW-0833">Ubl conjugation pathway</keyword>
<reference evidence="8 11" key="1">
    <citation type="journal article" date="2003" name="DNA Cell Biol.">
        <title>Expression of a conserved mouse stress-modulating gene, Bre: comparison with the human ortholog.</title>
        <authorList>
            <person name="Ching A.K.K."/>
            <person name="Li Q."/>
            <person name="Lim P.L."/>
            <person name="Chan J.Y.-H."/>
            <person name="Chui Y.L."/>
        </authorList>
    </citation>
    <scope>NUCLEOTIDE SEQUENCE [MRNA] (ISOFORMS 1; 2; 3; 4 AND 5)</scope>
    <scope>TISSUE SPECIFICITY</scope>
    <source>
        <strain evidence="11">BALB/cJ</strain>
        <strain>C57BL/6 X CBA/N</strain>
        <tissue evidence="11">Heart</tissue>
    </source>
</reference>
<reference evidence="8 12" key="2">
    <citation type="journal article" date="2005" name="Science">
        <title>The transcriptional landscape of the mammalian genome.</title>
        <authorList>
            <person name="Carninci P."/>
            <person name="Kasukawa T."/>
            <person name="Katayama S."/>
            <person name="Gough J."/>
            <person name="Frith M.C."/>
            <person name="Maeda N."/>
            <person name="Oyama R."/>
            <person name="Ravasi T."/>
            <person name="Lenhard B."/>
            <person name="Wells C."/>
            <person name="Kodzius R."/>
            <person name="Shimokawa K."/>
            <person name="Bajic V.B."/>
            <person name="Brenner S.E."/>
            <person name="Batalov S."/>
            <person name="Forrest A.R."/>
            <person name="Zavolan M."/>
            <person name="Davis M.J."/>
            <person name="Wilming L.G."/>
            <person name="Aidinis V."/>
            <person name="Allen J.E."/>
            <person name="Ambesi-Impiombato A."/>
            <person name="Apweiler R."/>
            <person name="Aturaliya R.N."/>
            <person name="Bailey T.L."/>
            <person name="Bansal M."/>
            <person name="Baxter L."/>
            <person name="Beisel K.W."/>
            <person name="Bersano T."/>
            <person name="Bono H."/>
            <person name="Chalk A.M."/>
            <person name="Chiu K.P."/>
            <person name="Choudhary V."/>
            <person name="Christoffels A."/>
            <person name="Clutterbuck D.R."/>
            <person name="Crowe M.L."/>
            <person name="Dalla E."/>
            <person name="Dalrymple B.P."/>
            <person name="de Bono B."/>
            <person name="Della Gatta G."/>
            <person name="di Bernardo D."/>
            <person name="Down T."/>
            <person name="Engstrom P."/>
            <person name="Fagiolini M."/>
            <person name="Faulkner G."/>
            <person name="Fletcher C.F."/>
            <person name="Fukushima T."/>
            <person name="Furuno M."/>
            <person name="Futaki S."/>
            <person name="Gariboldi M."/>
            <person name="Georgii-Hemming P."/>
            <person name="Gingeras T.R."/>
            <person name="Gojobori T."/>
            <person name="Green R.E."/>
            <person name="Gustincich S."/>
            <person name="Harbers M."/>
            <person name="Hayashi Y."/>
            <person name="Hensch T.K."/>
            <person name="Hirokawa N."/>
            <person name="Hill D."/>
            <person name="Huminiecki L."/>
            <person name="Iacono M."/>
            <person name="Ikeo K."/>
            <person name="Iwama A."/>
            <person name="Ishikawa T."/>
            <person name="Jakt M."/>
            <person name="Kanapin A."/>
            <person name="Katoh M."/>
            <person name="Kawasawa Y."/>
            <person name="Kelso J."/>
            <person name="Kitamura H."/>
            <person name="Kitano H."/>
            <person name="Kollias G."/>
            <person name="Krishnan S.P."/>
            <person name="Kruger A."/>
            <person name="Kummerfeld S.K."/>
            <person name="Kurochkin I.V."/>
            <person name="Lareau L.F."/>
            <person name="Lazarevic D."/>
            <person name="Lipovich L."/>
            <person name="Liu J."/>
            <person name="Liuni S."/>
            <person name="McWilliam S."/>
            <person name="Madan Babu M."/>
            <person name="Madera M."/>
            <person name="Marchionni L."/>
            <person name="Matsuda H."/>
            <person name="Matsuzawa S."/>
            <person name="Miki H."/>
            <person name="Mignone F."/>
            <person name="Miyake S."/>
            <person name="Morris K."/>
            <person name="Mottagui-Tabar S."/>
            <person name="Mulder N."/>
            <person name="Nakano N."/>
            <person name="Nakauchi H."/>
            <person name="Ng P."/>
            <person name="Nilsson R."/>
            <person name="Nishiguchi S."/>
            <person name="Nishikawa S."/>
            <person name="Nori F."/>
            <person name="Ohara O."/>
            <person name="Okazaki Y."/>
            <person name="Orlando V."/>
            <person name="Pang K.C."/>
            <person name="Pavan W.J."/>
            <person name="Pavesi G."/>
            <person name="Pesole G."/>
            <person name="Petrovsky N."/>
            <person name="Piazza S."/>
            <person name="Reed J."/>
            <person name="Reid J.F."/>
            <person name="Ring B.Z."/>
            <person name="Ringwald M."/>
            <person name="Rost B."/>
            <person name="Ruan Y."/>
            <person name="Salzberg S.L."/>
            <person name="Sandelin A."/>
            <person name="Schneider C."/>
            <person name="Schoenbach C."/>
            <person name="Sekiguchi K."/>
            <person name="Semple C.A."/>
            <person name="Seno S."/>
            <person name="Sessa L."/>
            <person name="Sheng Y."/>
            <person name="Shibata Y."/>
            <person name="Shimada H."/>
            <person name="Shimada K."/>
            <person name="Silva D."/>
            <person name="Sinclair B."/>
            <person name="Sperling S."/>
            <person name="Stupka E."/>
            <person name="Sugiura K."/>
            <person name="Sultana R."/>
            <person name="Takenaka Y."/>
            <person name="Taki K."/>
            <person name="Tammoja K."/>
            <person name="Tan S.L."/>
            <person name="Tang S."/>
            <person name="Taylor M.S."/>
            <person name="Tegner J."/>
            <person name="Teichmann S.A."/>
            <person name="Ueda H.R."/>
            <person name="van Nimwegen E."/>
            <person name="Verardo R."/>
            <person name="Wei C.L."/>
            <person name="Yagi K."/>
            <person name="Yamanishi H."/>
            <person name="Zabarovsky E."/>
            <person name="Zhu S."/>
            <person name="Zimmer A."/>
            <person name="Hide W."/>
            <person name="Bult C."/>
            <person name="Grimmond S.M."/>
            <person name="Teasdale R.D."/>
            <person name="Liu E.T."/>
            <person name="Brusic V."/>
            <person name="Quackenbush J."/>
            <person name="Wahlestedt C."/>
            <person name="Mattick J.S."/>
            <person name="Hume D.A."/>
            <person name="Kai C."/>
            <person name="Sasaki D."/>
            <person name="Tomaru Y."/>
            <person name="Fukuda S."/>
            <person name="Kanamori-Katayama M."/>
            <person name="Suzuki M."/>
            <person name="Aoki J."/>
            <person name="Arakawa T."/>
            <person name="Iida J."/>
            <person name="Imamura K."/>
            <person name="Itoh M."/>
            <person name="Kato T."/>
            <person name="Kawaji H."/>
            <person name="Kawagashira N."/>
            <person name="Kawashima T."/>
            <person name="Kojima M."/>
            <person name="Kondo S."/>
            <person name="Konno H."/>
            <person name="Nakano K."/>
            <person name="Ninomiya N."/>
            <person name="Nishio T."/>
            <person name="Okada M."/>
            <person name="Plessy C."/>
            <person name="Shibata K."/>
            <person name="Shiraki T."/>
            <person name="Suzuki S."/>
            <person name="Tagami M."/>
            <person name="Waki K."/>
            <person name="Watahiki A."/>
            <person name="Okamura-Oho Y."/>
            <person name="Suzuki H."/>
            <person name="Kawai J."/>
            <person name="Hayashizaki Y."/>
        </authorList>
    </citation>
    <scope>NUCLEOTIDE SEQUENCE [LARGE SCALE MRNA] (ISOFORM 2)</scope>
    <source>
        <strain evidence="12">C57BL/6J</strain>
        <strain evidence="14">NOD</strain>
        <tissue evidence="12">Embryo</tissue>
        <tissue evidence="13">Medulla oblongata</tissue>
        <tissue evidence="14">Spleen</tissue>
    </source>
</reference>
<reference evidence="8 10" key="3">
    <citation type="journal article" date="2004" name="Genome Res.">
        <title>The status, quality, and expansion of the NIH full-length cDNA project: the Mammalian Gene Collection (MGC).</title>
        <authorList>
            <consortium name="The MGC Project Team"/>
        </authorList>
    </citation>
    <scope>NUCLEOTIDE SEQUENCE [LARGE SCALE MRNA] (ISOFORM 2)</scope>
    <source>
        <strain>Czech II</strain>
        <tissue evidence="10">Kidney</tissue>
        <tissue>Lung</tissue>
    </source>
</reference>
<reference evidence="8" key="4">
    <citation type="journal article" date="1998" name="FASEB J.">
        <title>BRE: a modulator of TNF-alpha action.</title>
        <authorList>
            <person name="Gu C."/>
            <person name="Castellino A."/>
            <person name="Chan J.Y.-H."/>
            <person name="Chao M.V."/>
        </authorList>
    </citation>
    <scope>FUNCTION</scope>
    <scope>INTERACTION WITH TNFRSF1A</scope>
</reference>
<reference evidence="8" key="5">
    <citation type="journal article" date="2001" name="Biochem. Biophys. Res. Commun.">
        <title>Expression of human BRE in multiple isoforms.</title>
        <authorList>
            <person name="Ching A.K.K."/>
            <person name="Li P.S."/>
            <person name="Li Q."/>
            <person name="Chan B.C.L."/>
            <person name="Chan J.Y.-H."/>
            <person name="Lim P.L."/>
            <person name="Pang J.C.S."/>
            <person name="Chui Y.L."/>
        </authorList>
    </citation>
    <scope>TISSUE SPECIFICITY</scope>
</reference>
<reference key="6">
    <citation type="journal article" date="2010" name="Cell">
        <title>A tissue-specific atlas of mouse protein phosphorylation and expression.</title>
        <authorList>
            <person name="Huttlin E.L."/>
            <person name="Jedrychowski M.P."/>
            <person name="Elias J.E."/>
            <person name="Goswami T."/>
            <person name="Rad R."/>
            <person name="Beausoleil S.A."/>
            <person name="Villen J."/>
            <person name="Haas W."/>
            <person name="Sowa M.E."/>
            <person name="Gygi S.P."/>
        </authorList>
    </citation>
    <scope>IDENTIFICATION BY MASS SPECTROMETRY [LARGE SCALE ANALYSIS]</scope>
    <source>
        <tissue>Brain</tissue>
        <tissue>Brown adipose tissue</tissue>
        <tissue>Heart</tissue>
        <tissue>Kidney</tissue>
        <tissue>Liver</tissue>
        <tissue>Lung</tissue>
        <tissue>Pancreas</tissue>
        <tissue>Spleen</tissue>
        <tissue>Testis</tissue>
    </source>
</reference>